<feature type="chain" id="PRO_1000134856" description="4-hydroxy-tetrahydrodipicolinate synthase">
    <location>
        <begin position="1"/>
        <end position="301"/>
    </location>
</feature>
<feature type="active site" description="Proton donor/acceptor" evidence="1">
    <location>
        <position position="134"/>
    </location>
</feature>
<feature type="active site" description="Schiff-base intermediate with substrate" evidence="1">
    <location>
        <position position="162"/>
    </location>
</feature>
<feature type="binding site" evidence="1">
    <location>
        <position position="46"/>
    </location>
    <ligand>
        <name>pyruvate</name>
        <dbReference type="ChEBI" id="CHEBI:15361"/>
    </ligand>
</feature>
<feature type="binding site" evidence="1">
    <location>
        <position position="203"/>
    </location>
    <ligand>
        <name>pyruvate</name>
        <dbReference type="ChEBI" id="CHEBI:15361"/>
    </ligand>
</feature>
<feature type="site" description="Part of a proton relay during catalysis" evidence="1">
    <location>
        <position position="45"/>
    </location>
</feature>
<feature type="site" description="Part of a proton relay during catalysis" evidence="1">
    <location>
        <position position="108"/>
    </location>
</feature>
<gene>
    <name evidence="1" type="primary">dapA</name>
    <name type="ordered locus">AMF_297</name>
</gene>
<reference key="1">
    <citation type="journal article" date="2009" name="BMC Genomics">
        <title>Conservation in the face of diversity: multistrain analysis of an intracellular bacterium.</title>
        <authorList>
            <person name="Dark M.J."/>
            <person name="Herndon D.R."/>
            <person name="Kappmeyer L.S."/>
            <person name="Gonzales M.P."/>
            <person name="Nordeen E."/>
            <person name="Palmer G.H."/>
            <person name="Knowles D.P. Jr."/>
            <person name="Brayton K.A."/>
        </authorList>
    </citation>
    <scope>NUCLEOTIDE SEQUENCE [LARGE SCALE GENOMIC DNA]</scope>
    <source>
        <strain>Florida</strain>
    </source>
</reference>
<name>DAPA_ANAMF</name>
<proteinExistence type="inferred from homology"/>
<comment type="function">
    <text evidence="1">Catalyzes the condensation of (S)-aspartate-beta-semialdehyde [(S)-ASA] and pyruvate to 4-hydroxy-tetrahydrodipicolinate (HTPA).</text>
</comment>
<comment type="catalytic activity">
    <reaction evidence="1">
        <text>L-aspartate 4-semialdehyde + pyruvate = (2S,4S)-4-hydroxy-2,3,4,5-tetrahydrodipicolinate + H2O + H(+)</text>
        <dbReference type="Rhea" id="RHEA:34171"/>
        <dbReference type="ChEBI" id="CHEBI:15361"/>
        <dbReference type="ChEBI" id="CHEBI:15377"/>
        <dbReference type="ChEBI" id="CHEBI:15378"/>
        <dbReference type="ChEBI" id="CHEBI:67139"/>
        <dbReference type="ChEBI" id="CHEBI:537519"/>
        <dbReference type="EC" id="4.3.3.7"/>
    </reaction>
</comment>
<comment type="pathway">
    <text evidence="1">Amino-acid biosynthesis; L-lysine biosynthesis via DAP pathway; (S)-tetrahydrodipicolinate from L-aspartate: step 3/4.</text>
</comment>
<comment type="subunit">
    <text evidence="1">Homotetramer; dimer of dimers.</text>
</comment>
<comment type="subcellular location">
    <subcellularLocation>
        <location evidence="1">Cytoplasm</location>
    </subcellularLocation>
</comment>
<comment type="similarity">
    <text evidence="1">Belongs to the DapA family.</text>
</comment>
<comment type="caution">
    <text evidence="2">Was originally thought to be a dihydrodipicolinate synthase (DHDPS), catalyzing the condensation of (S)-aspartate-beta-semialdehyde [(S)-ASA] and pyruvate to dihydrodipicolinate (DHDP). However, it was shown in E.coli that the product of the enzymatic reaction is not dihydrodipicolinate but in fact (4S)-4-hydroxy-2,3,4,5-tetrahydro-(2S)-dipicolinic acid (HTPA), and that the consecutive dehydration reaction leading to DHDP is not spontaneous but catalyzed by DapB.</text>
</comment>
<protein>
    <recommendedName>
        <fullName evidence="1">4-hydroxy-tetrahydrodipicolinate synthase</fullName>
        <shortName evidence="1">HTPA synthase</shortName>
        <ecNumber evidence="1">4.3.3.7</ecNumber>
    </recommendedName>
</protein>
<organism>
    <name type="scientific">Anaplasma marginale (strain Florida)</name>
    <dbReference type="NCBI Taxonomy" id="320483"/>
    <lineage>
        <taxon>Bacteria</taxon>
        <taxon>Pseudomonadati</taxon>
        <taxon>Pseudomonadota</taxon>
        <taxon>Alphaproteobacteria</taxon>
        <taxon>Rickettsiales</taxon>
        <taxon>Anaplasmataceae</taxon>
        <taxon>Anaplasma</taxon>
    </lineage>
</organism>
<dbReference type="EC" id="4.3.3.7" evidence="1"/>
<dbReference type="EMBL" id="CP001079">
    <property type="protein sequence ID" value="ACM49169.1"/>
    <property type="molecule type" value="Genomic_DNA"/>
</dbReference>
<dbReference type="RefSeq" id="WP_010269726.1">
    <property type="nucleotide sequence ID" value="NZ_AFMS01000126.1"/>
</dbReference>
<dbReference type="SMR" id="B9KI57"/>
<dbReference type="STRING" id="320483.AMF_297"/>
<dbReference type="GeneID" id="7398407"/>
<dbReference type="KEGG" id="amf:AMF_297"/>
<dbReference type="PATRIC" id="fig|320483.3.peg.349"/>
<dbReference type="eggNOG" id="COG0329">
    <property type="taxonomic scope" value="Bacteria"/>
</dbReference>
<dbReference type="HOGENOM" id="CLU_049343_7_1_5"/>
<dbReference type="UniPathway" id="UPA00034">
    <property type="reaction ID" value="UER00017"/>
</dbReference>
<dbReference type="Proteomes" id="UP000007307">
    <property type="component" value="Chromosome"/>
</dbReference>
<dbReference type="GO" id="GO:0005829">
    <property type="term" value="C:cytosol"/>
    <property type="evidence" value="ECO:0007669"/>
    <property type="project" value="TreeGrafter"/>
</dbReference>
<dbReference type="GO" id="GO:0008840">
    <property type="term" value="F:4-hydroxy-tetrahydrodipicolinate synthase activity"/>
    <property type="evidence" value="ECO:0007669"/>
    <property type="project" value="UniProtKB-UniRule"/>
</dbReference>
<dbReference type="GO" id="GO:0019877">
    <property type="term" value="P:diaminopimelate biosynthetic process"/>
    <property type="evidence" value="ECO:0007669"/>
    <property type="project" value="UniProtKB-UniRule"/>
</dbReference>
<dbReference type="GO" id="GO:0009089">
    <property type="term" value="P:lysine biosynthetic process via diaminopimelate"/>
    <property type="evidence" value="ECO:0007669"/>
    <property type="project" value="UniProtKB-UniRule"/>
</dbReference>
<dbReference type="CDD" id="cd00950">
    <property type="entry name" value="DHDPS"/>
    <property type="match status" value="1"/>
</dbReference>
<dbReference type="Gene3D" id="3.20.20.70">
    <property type="entry name" value="Aldolase class I"/>
    <property type="match status" value="1"/>
</dbReference>
<dbReference type="HAMAP" id="MF_00418">
    <property type="entry name" value="DapA"/>
    <property type="match status" value="1"/>
</dbReference>
<dbReference type="InterPro" id="IPR013785">
    <property type="entry name" value="Aldolase_TIM"/>
</dbReference>
<dbReference type="InterPro" id="IPR005263">
    <property type="entry name" value="DapA"/>
</dbReference>
<dbReference type="InterPro" id="IPR002220">
    <property type="entry name" value="DapA-like"/>
</dbReference>
<dbReference type="InterPro" id="IPR020625">
    <property type="entry name" value="Schiff_base-form_aldolases_AS"/>
</dbReference>
<dbReference type="InterPro" id="IPR020624">
    <property type="entry name" value="Schiff_base-form_aldolases_CS"/>
</dbReference>
<dbReference type="NCBIfam" id="TIGR00674">
    <property type="entry name" value="dapA"/>
    <property type="match status" value="1"/>
</dbReference>
<dbReference type="PANTHER" id="PTHR12128:SF66">
    <property type="entry name" value="4-HYDROXY-2-OXOGLUTARATE ALDOLASE, MITOCHONDRIAL"/>
    <property type="match status" value="1"/>
</dbReference>
<dbReference type="PANTHER" id="PTHR12128">
    <property type="entry name" value="DIHYDRODIPICOLINATE SYNTHASE"/>
    <property type="match status" value="1"/>
</dbReference>
<dbReference type="Pfam" id="PF00701">
    <property type="entry name" value="DHDPS"/>
    <property type="match status" value="1"/>
</dbReference>
<dbReference type="PIRSF" id="PIRSF001365">
    <property type="entry name" value="DHDPS"/>
    <property type="match status" value="1"/>
</dbReference>
<dbReference type="PRINTS" id="PR00146">
    <property type="entry name" value="DHPICSNTHASE"/>
</dbReference>
<dbReference type="SMART" id="SM01130">
    <property type="entry name" value="DHDPS"/>
    <property type="match status" value="1"/>
</dbReference>
<dbReference type="SUPFAM" id="SSF51569">
    <property type="entry name" value="Aldolase"/>
    <property type="match status" value="1"/>
</dbReference>
<dbReference type="PROSITE" id="PS00665">
    <property type="entry name" value="DHDPS_1"/>
    <property type="match status" value="1"/>
</dbReference>
<dbReference type="PROSITE" id="PS00666">
    <property type="entry name" value="DHDPS_2"/>
    <property type="match status" value="1"/>
</dbReference>
<sequence length="301" mass="32358">MKLSGVFTALATPFRDDLSLDERALASFVDWQISSGISGIVPCGTTGESATLNFEEYCTVVRLCIETARGRILVIAGAGSHCTTETISRALFVQSAGADAALIVVPYYNRPSDEGVYQHFRAVHDATNIPIVLYNVPQRTAIDISNDTIRRIAELPRVVGIKDCTGAERVAALKAILPEKVAILSGEDETALASYMNGGSGCISVVSNVAPKMAVELYRLHALGKINMAKQVSGNLAALSRVLFIEPSPSPTKYALSLMGKMRPKVRLPLVELTSSGQTAVKNVLETLDLLRQQKAMHSQL</sequence>
<evidence type="ECO:0000255" key="1">
    <source>
        <dbReference type="HAMAP-Rule" id="MF_00418"/>
    </source>
</evidence>
<evidence type="ECO:0000305" key="2"/>
<keyword id="KW-0028">Amino-acid biosynthesis</keyword>
<keyword id="KW-0963">Cytoplasm</keyword>
<keyword id="KW-0220">Diaminopimelate biosynthesis</keyword>
<keyword id="KW-0456">Lyase</keyword>
<keyword id="KW-0457">Lysine biosynthesis</keyword>
<keyword id="KW-1185">Reference proteome</keyword>
<keyword id="KW-0704">Schiff base</keyword>
<accession>B9KI57</accession>